<reference key="1">
    <citation type="submission" date="2005-08" db="EMBL/GenBank/DDBJ databases">
        <title>Complete sequence of chromosome 1 of Nitrosospira multiformis ATCC 25196.</title>
        <authorList>
            <person name="Copeland A."/>
            <person name="Lucas S."/>
            <person name="Lapidus A."/>
            <person name="Barry K."/>
            <person name="Detter J.C."/>
            <person name="Glavina T."/>
            <person name="Hammon N."/>
            <person name="Israni S."/>
            <person name="Pitluck S."/>
            <person name="Chain P."/>
            <person name="Malfatti S."/>
            <person name="Shin M."/>
            <person name="Vergez L."/>
            <person name="Schmutz J."/>
            <person name="Larimer F."/>
            <person name="Land M."/>
            <person name="Hauser L."/>
            <person name="Kyrpides N."/>
            <person name="Lykidis A."/>
            <person name="Richardson P."/>
        </authorList>
    </citation>
    <scope>NUCLEOTIDE SEQUENCE [LARGE SCALE GENOMIC DNA]</scope>
    <source>
        <strain>ATCC 25196 / NCIMB 11849 / C 71</strain>
    </source>
</reference>
<protein>
    <recommendedName>
        <fullName evidence="1">ATP phosphoribosyltransferase regulatory subunit</fullName>
    </recommendedName>
</protein>
<accession>Q2YBX1</accession>
<dbReference type="EMBL" id="CP000103">
    <property type="protein sequence ID" value="ABB73750.1"/>
    <property type="molecule type" value="Genomic_DNA"/>
</dbReference>
<dbReference type="SMR" id="Q2YBX1"/>
<dbReference type="STRING" id="323848.Nmul_A0442"/>
<dbReference type="KEGG" id="nmu:Nmul_A0442"/>
<dbReference type="eggNOG" id="COG3705">
    <property type="taxonomic scope" value="Bacteria"/>
</dbReference>
<dbReference type="HOGENOM" id="CLU_025113_0_1_4"/>
<dbReference type="OrthoDB" id="9769617at2"/>
<dbReference type="UniPathway" id="UPA00031">
    <property type="reaction ID" value="UER00006"/>
</dbReference>
<dbReference type="Proteomes" id="UP000002718">
    <property type="component" value="Chromosome"/>
</dbReference>
<dbReference type="GO" id="GO:0005737">
    <property type="term" value="C:cytoplasm"/>
    <property type="evidence" value="ECO:0007669"/>
    <property type="project" value="UniProtKB-SubCell"/>
</dbReference>
<dbReference type="GO" id="GO:0000105">
    <property type="term" value="P:L-histidine biosynthetic process"/>
    <property type="evidence" value="ECO:0007669"/>
    <property type="project" value="UniProtKB-UniRule"/>
</dbReference>
<dbReference type="CDD" id="cd00773">
    <property type="entry name" value="HisRS-like_core"/>
    <property type="match status" value="1"/>
</dbReference>
<dbReference type="Gene3D" id="3.30.930.10">
    <property type="entry name" value="Bira Bifunctional Protein, Domain 2"/>
    <property type="match status" value="1"/>
</dbReference>
<dbReference type="HAMAP" id="MF_00125">
    <property type="entry name" value="HisZ"/>
    <property type="match status" value="1"/>
</dbReference>
<dbReference type="InterPro" id="IPR045864">
    <property type="entry name" value="aa-tRNA-synth_II/BPL/LPL"/>
</dbReference>
<dbReference type="InterPro" id="IPR041715">
    <property type="entry name" value="HisRS-like_core"/>
</dbReference>
<dbReference type="InterPro" id="IPR004516">
    <property type="entry name" value="HisRS/HisZ"/>
</dbReference>
<dbReference type="InterPro" id="IPR004517">
    <property type="entry name" value="HisZ"/>
</dbReference>
<dbReference type="NCBIfam" id="TIGR00443">
    <property type="entry name" value="hisZ_biosyn_reg"/>
    <property type="match status" value="1"/>
</dbReference>
<dbReference type="NCBIfam" id="NF008935">
    <property type="entry name" value="PRK12292.1-1"/>
    <property type="match status" value="1"/>
</dbReference>
<dbReference type="NCBIfam" id="NF009086">
    <property type="entry name" value="PRK12421.1"/>
    <property type="match status" value="1"/>
</dbReference>
<dbReference type="PANTHER" id="PTHR11476:SF7">
    <property type="entry name" value="HISTIDINE--TRNA LIGASE"/>
    <property type="match status" value="1"/>
</dbReference>
<dbReference type="PANTHER" id="PTHR11476">
    <property type="entry name" value="HISTIDYL-TRNA SYNTHETASE"/>
    <property type="match status" value="1"/>
</dbReference>
<dbReference type="Pfam" id="PF13393">
    <property type="entry name" value="tRNA-synt_His"/>
    <property type="match status" value="1"/>
</dbReference>
<dbReference type="PIRSF" id="PIRSF001549">
    <property type="entry name" value="His-tRNA_synth"/>
    <property type="match status" value="1"/>
</dbReference>
<dbReference type="SUPFAM" id="SSF55681">
    <property type="entry name" value="Class II aaRS and biotin synthetases"/>
    <property type="match status" value="1"/>
</dbReference>
<comment type="function">
    <text evidence="1">Required for the first step of histidine biosynthesis. May allow the feedback regulation of ATP phosphoribosyltransferase activity by histidine.</text>
</comment>
<comment type="pathway">
    <text evidence="1">Amino-acid biosynthesis; L-histidine biosynthesis; L-histidine from 5-phospho-alpha-D-ribose 1-diphosphate: step 1/9.</text>
</comment>
<comment type="subunit">
    <text evidence="1">Heteromultimer composed of HisG and HisZ subunits.</text>
</comment>
<comment type="subcellular location">
    <subcellularLocation>
        <location evidence="1">Cytoplasm</location>
    </subcellularLocation>
</comment>
<comment type="miscellaneous">
    <text>This function is generally fulfilled by the C-terminal part of HisG, which is missing in some bacteria such as this one.</text>
</comment>
<comment type="similarity">
    <text evidence="1">Belongs to the class-II aminoacyl-tRNA synthetase family. HisZ subfamily.</text>
</comment>
<organism>
    <name type="scientific">Nitrosospira multiformis (strain ATCC 25196 / NCIMB 11849 / C 71)</name>
    <dbReference type="NCBI Taxonomy" id="323848"/>
    <lineage>
        <taxon>Bacteria</taxon>
        <taxon>Pseudomonadati</taxon>
        <taxon>Pseudomonadota</taxon>
        <taxon>Betaproteobacteria</taxon>
        <taxon>Nitrosomonadales</taxon>
        <taxon>Nitrosomonadaceae</taxon>
        <taxon>Nitrosospira</taxon>
    </lineage>
</organism>
<gene>
    <name evidence="1" type="primary">hisZ</name>
    <name type="ordered locus">Nmul_A0442</name>
</gene>
<keyword id="KW-0028">Amino-acid biosynthesis</keyword>
<keyword id="KW-0963">Cytoplasm</keyword>
<keyword id="KW-0368">Histidine biosynthesis</keyword>
<keyword id="KW-1185">Reference proteome</keyword>
<sequence>MNMSAWALPEYIEDILPAEALKIEMMRRRVLDWLFVNGYELVGPPLLEYVESLLTGSGGQMNLRVLKVVDQLSGRMMGLRADMTPQVARIDAHLLNRKGITRLCYAGSVLHARPSGLTRTREPLQIGAELYGHQGLESDLEIQRLMLQSLAIAGVGNIHLDLGHVAVFRGLIRSTGISPDLEMELSGALQGKDKAALKELCAGLKKQVDASVREALQLLPELYGDENVLTLARSALPSYPGIMKALDELEMVASELSPLVDTLAFDLADLRGYHYHSGMVFAAYTDNCPNAIAVGGRYDEVGKAFGRARPATGFSMDLRELSGLMSSDSHPRGILAPFIKEDKALEKKIEQLRNEGQIVIVALPGHENDAGSFNCDKKLVSENGVWSIADALI</sequence>
<evidence type="ECO:0000255" key="1">
    <source>
        <dbReference type="HAMAP-Rule" id="MF_00125"/>
    </source>
</evidence>
<name>HISZ_NITMU</name>
<proteinExistence type="inferred from homology"/>
<feature type="chain" id="PRO_0000242844" description="ATP phosphoribosyltransferase regulatory subunit">
    <location>
        <begin position="1"/>
        <end position="393"/>
    </location>
</feature>